<organism>
    <name type="scientific">Escherichia coli O81 (strain ED1a)</name>
    <dbReference type="NCBI Taxonomy" id="585397"/>
    <lineage>
        <taxon>Bacteria</taxon>
        <taxon>Pseudomonadati</taxon>
        <taxon>Pseudomonadota</taxon>
        <taxon>Gammaproteobacteria</taxon>
        <taxon>Enterobacterales</taxon>
        <taxon>Enterobacteriaceae</taxon>
        <taxon>Escherichia</taxon>
    </lineage>
</organism>
<dbReference type="EMBL" id="CU928162">
    <property type="protein sequence ID" value="CAR11054.1"/>
    <property type="molecule type" value="Genomic_DNA"/>
</dbReference>
<dbReference type="RefSeq" id="WP_000148581.1">
    <property type="nucleotide sequence ID" value="NC_011745.1"/>
</dbReference>
<dbReference type="SMR" id="B7MSX9"/>
<dbReference type="GeneID" id="93777580"/>
<dbReference type="KEGG" id="ecq:ECED1_5099"/>
<dbReference type="HOGENOM" id="CLU_128576_0_0_6"/>
<dbReference type="Proteomes" id="UP000000748">
    <property type="component" value="Chromosome"/>
</dbReference>
<dbReference type="GO" id="GO:0009347">
    <property type="term" value="C:aspartate carbamoyltransferase complex"/>
    <property type="evidence" value="ECO:0007669"/>
    <property type="project" value="InterPro"/>
</dbReference>
<dbReference type="GO" id="GO:0046872">
    <property type="term" value="F:metal ion binding"/>
    <property type="evidence" value="ECO:0007669"/>
    <property type="project" value="UniProtKB-KW"/>
</dbReference>
<dbReference type="GO" id="GO:0006207">
    <property type="term" value="P:'de novo' pyrimidine nucleobase biosynthetic process"/>
    <property type="evidence" value="ECO:0007669"/>
    <property type="project" value="InterPro"/>
</dbReference>
<dbReference type="GO" id="GO:0006221">
    <property type="term" value="P:pyrimidine nucleotide biosynthetic process"/>
    <property type="evidence" value="ECO:0007669"/>
    <property type="project" value="UniProtKB-UniRule"/>
</dbReference>
<dbReference type="FunFam" id="2.30.30.20:FF:000001">
    <property type="entry name" value="Aspartate carbamoyltransferase regulatory chain"/>
    <property type="match status" value="1"/>
</dbReference>
<dbReference type="FunFam" id="3.30.70.140:FF:000001">
    <property type="entry name" value="Aspartate carbamoyltransferase regulatory chain"/>
    <property type="match status" value="1"/>
</dbReference>
<dbReference type="Gene3D" id="2.30.30.20">
    <property type="entry name" value="Aspartate carbamoyltransferase regulatory subunit, C-terminal domain"/>
    <property type="match status" value="1"/>
</dbReference>
<dbReference type="Gene3D" id="3.30.70.140">
    <property type="entry name" value="Aspartate carbamoyltransferase regulatory subunit, N-terminal domain"/>
    <property type="match status" value="1"/>
</dbReference>
<dbReference type="HAMAP" id="MF_00002">
    <property type="entry name" value="Asp_carb_tr_reg"/>
    <property type="match status" value="1"/>
</dbReference>
<dbReference type="InterPro" id="IPR020545">
    <property type="entry name" value="Asp_carbamoyltransf_reg_N"/>
</dbReference>
<dbReference type="InterPro" id="IPR002801">
    <property type="entry name" value="Asp_carbamoylTrfase_reg"/>
</dbReference>
<dbReference type="InterPro" id="IPR020542">
    <property type="entry name" value="Asp_carbamoyltrfase_reg_C"/>
</dbReference>
<dbReference type="InterPro" id="IPR036792">
    <property type="entry name" value="Asp_carbatrfase_reg_C_sf"/>
</dbReference>
<dbReference type="InterPro" id="IPR036793">
    <property type="entry name" value="Asp_carbatrfase_reg_N_sf"/>
</dbReference>
<dbReference type="NCBIfam" id="TIGR00240">
    <property type="entry name" value="ATCase_reg"/>
    <property type="match status" value="1"/>
</dbReference>
<dbReference type="PANTHER" id="PTHR35805">
    <property type="entry name" value="ASPARTATE CARBAMOYLTRANSFERASE REGULATORY CHAIN"/>
    <property type="match status" value="1"/>
</dbReference>
<dbReference type="PANTHER" id="PTHR35805:SF1">
    <property type="entry name" value="ASPARTATE CARBAMOYLTRANSFERASE REGULATORY CHAIN"/>
    <property type="match status" value="1"/>
</dbReference>
<dbReference type="Pfam" id="PF01948">
    <property type="entry name" value="PyrI"/>
    <property type="match status" value="1"/>
</dbReference>
<dbReference type="Pfam" id="PF02748">
    <property type="entry name" value="PyrI_C"/>
    <property type="match status" value="1"/>
</dbReference>
<dbReference type="SUPFAM" id="SSF57825">
    <property type="entry name" value="Aspartate carbamoyltransferase, Regulatory-chain, C-terminal domain"/>
    <property type="match status" value="1"/>
</dbReference>
<dbReference type="SUPFAM" id="SSF54893">
    <property type="entry name" value="Aspartate carbamoyltransferase, Regulatory-chain, N-terminal domain"/>
    <property type="match status" value="1"/>
</dbReference>
<comment type="function">
    <text evidence="1">Involved in allosteric regulation of aspartate carbamoyltransferase.</text>
</comment>
<comment type="cofactor">
    <cofactor evidence="1">
        <name>Zn(2+)</name>
        <dbReference type="ChEBI" id="CHEBI:29105"/>
    </cofactor>
    <text evidence="1">Binds 1 zinc ion per subunit.</text>
</comment>
<comment type="subunit">
    <text evidence="1">Contains catalytic and regulatory chains.</text>
</comment>
<comment type="similarity">
    <text evidence="1">Belongs to the PyrI family.</text>
</comment>
<accession>B7MSX9</accession>
<name>PYRI_ECO81</name>
<keyword id="KW-0479">Metal-binding</keyword>
<keyword id="KW-0665">Pyrimidine biosynthesis</keyword>
<keyword id="KW-0862">Zinc</keyword>
<evidence type="ECO:0000255" key="1">
    <source>
        <dbReference type="HAMAP-Rule" id="MF_00002"/>
    </source>
</evidence>
<proteinExistence type="inferred from homology"/>
<reference key="1">
    <citation type="journal article" date="2009" name="PLoS Genet.">
        <title>Organised genome dynamics in the Escherichia coli species results in highly diverse adaptive paths.</title>
        <authorList>
            <person name="Touchon M."/>
            <person name="Hoede C."/>
            <person name="Tenaillon O."/>
            <person name="Barbe V."/>
            <person name="Baeriswyl S."/>
            <person name="Bidet P."/>
            <person name="Bingen E."/>
            <person name="Bonacorsi S."/>
            <person name="Bouchier C."/>
            <person name="Bouvet O."/>
            <person name="Calteau A."/>
            <person name="Chiapello H."/>
            <person name="Clermont O."/>
            <person name="Cruveiller S."/>
            <person name="Danchin A."/>
            <person name="Diard M."/>
            <person name="Dossat C."/>
            <person name="Karoui M.E."/>
            <person name="Frapy E."/>
            <person name="Garry L."/>
            <person name="Ghigo J.M."/>
            <person name="Gilles A.M."/>
            <person name="Johnson J."/>
            <person name="Le Bouguenec C."/>
            <person name="Lescat M."/>
            <person name="Mangenot S."/>
            <person name="Martinez-Jehanne V."/>
            <person name="Matic I."/>
            <person name="Nassif X."/>
            <person name="Oztas S."/>
            <person name="Petit M.A."/>
            <person name="Pichon C."/>
            <person name="Rouy Z."/>
            <person name="Ruf C.S."/>
            <person name="Schneider D."/>
            <person name="Tourret J."/>
            <person name="Vacherie B."/>
            <person name="Vallenet D."/>
            <person name="Medigue C."/>
            <person name="Rocha E.P.C."/>
            <person name="Denamur E."/>
        </authorList>
    </citation>
    <scope>NUCLEOTIDE SEQUENCE [LARGE SCALE GENOMIC DNA]</scope>
    <source>
        <strain>ED1a</strain>
    </source>
</reference>
<sequence>MTHDNKLQVEAIKRGTVIDHIPAQIGFKLLSLFKLTETDQRITIGLNLPSGEMGRKDLIKIENTFLSEDQVDQLALYAPQATVNRIDNYEVVGKSRPSLPERIDNVLVCPNSNCISHAEPVSSSFAVRKRANDIALKCKYCEKEFSHNVVLAN</sequence>
<protein>
    <recommendedName>
        <fullName evidence="1">Aspartate carbamoyltransferase regulatory chain</fullName>
    </recommendedName>
</protein>
<feature type="chain" id="PRO_1000193113" description="Aspartate carbamoyltransferase regulatory chain">
    <location>
        <begin position="1"/>
        <end position="153"/>
    </location>
</feature>
<feature type="binding site" evidence="1">
    <location>
        <position position="109"/>
    </location>
    <ligand>
        <name>Zn(2+)</name>
        <dbReference type="ChEBI" id="CHEBI:29105"/>
    </ligand>
</feature>
<feature type="binding site" evidence="1">
    <location>
        <position position="114"/>
    </location>
    <ligand>
        <name>Zn(2+)</name>
        <dbReference type="ChEBI" id="CHEBI:29105"/>
    </ligand>
</feature>
<feature type="binding site" evidence="1">
    <location>
        <position position="138"/>
    </location>
    <ligand>
        <name>Zn(2+)</name>
        <dbReference type="ChEBI" id="CHEBI:29105"/>
    </ligand>
</feature>
<feature type="binding site" evidence="1">
    <location>
        <position position="141"/>
    </location>
    <ligand>
        <name>Zn(2+)</name>
        <dbReference type="ChEBI" id="CHEBI:29105"/>
    </ligand>
</feature>
<gene>
    <name evidence="1" type="primary">pyrI</name>
    <name type="ordered locus">ECED1_5099</name>
</gene>